<name>CELF5_XENTR</name>
<sequence>MARLTEREARRQQQQHPPQQQQPRACPMSGPEPPAQQSDSMKDLDAIKLFVGQIPRNLEEKDLKPLFEQFGKIYELTVLKDRYTGMHKGCAFLTYCARDSAIKAQTALHEQKTLPGMARPIQVKPADSESRGGDRKLFVGMLSKQQSEEEVTSMFQAFGSIEECSVLRGPDGSSKGCAFVKFSSHAEAQAAIQALHGSQTMPGASSSLVVKFADTDKERTLRRMQQMVGQLGIFTPSLALPISPYSAYAQALMQQQTTVLSTSHGSYLSPSVAFPSCHIQQIGAVNLNGLPAAPITPASGLHSPPVIGTAAVPGLVAPLTNGFPGLVPFPSSHPALDTIYTNSIVPYPAQSPALTVESLHPSFTGVQQYSAIYPTAALTPVTHSTPQPPPILQQREGPEGCNLFIYHLPQEFGDNELTQMFLPFGNIISSKVFMDRATNQSKCFGFVSFDNPSSAQTAIQAMNGFQIGMKRLKVQLKRPKDTTQPY</sequence>
<dbReference type="EMBL" id="BC125739">
    <property type="protein sequence ID" value="AAI25740.1"/>
    <property type="molecule type" value="mRNA"/>
</dbReference>
<dbReference type="RefSeq" id="NP_001090639.1">
    <property type="nucleotide sequence ID" value="NM_001097170.1"/>
</dbReference>
<dbReference type="SMR" id="A0JM51"/>
<dbReference type="FunCoup" id="A0JM51">
    <property type="interactions" value="231"/>
</dbReference>
<dbReference type="PaxDb" id="8364-ENSXETP00000058992"/>
<dbReference type="DNASU" id="100036604"/>
<dbReference type="GeneID" id="100036604"/>
<dbReference type="KEGG" id="xtr:100036604"/>
<dbReference type="AGR" id="Xenbase:XB-GENE-494002"/>
<dbReference type="CTD" id="60680"/>
<dbReference type="Xenbase" id="XB-GENE-494002">
    <property type="gene designation" value="celf5"/>
</dbReference>
<dbReference type="eggNOG" id="KOG0146">
    <property type="taxonomic scope" value="Eukaryota"/>
</dbReference>
<dbReference type="InParanoid" id="A0JM51"/>
<dbReference type="OMA" id="PANIAHF"/>
<dbReference type="OrthoDB" id="410044at2759"/>
<dbReference type="Proteomes" id="UP000008143">
    <property type="component" value="Chromosome 1"/>
</dbReference>
<dbReference type="Bgee" id="ENSXETG00000014344">
    <property type="expression patterns" value="Expressed in brain and 2 other cell types or tissues"/>
</dbReference>
<dbReference type="ExpressionAtlas" id="A0JM51">
    <property type="expression patterns" value="baseline"/>
</dbReference>
<dbReference type="GO" id="GO:0005737">
    <property type="term" value="C:cytoplasm"/>
    <property type="evidence" value="ECO:0007669"/>
    <property type="project" value="UniProtKB-SubCell"/>
</dbReference>
<dbReference type="GO" id="GO:0005634">
    <property type="term" value="C:nucleus"/>
    <property type="evidence" value="ECO:0007669"/>
    <property type="project" value="UniProtKB-SubCell"/>
</dbReference>
<dbReference type="GO" id="GO:0003723">
    <property type="term" value="F:RNA binding"/>
    <property type="evidence" value="ECO:0007669"/>
    <property type="project" value="UniProtKB-KW"/>
</dbReference>
<dbReference type="GO" id="GO:0006397">
    <property type="term" value="P:mRNA processing"/>
    <property type="evidence" value="ECO:0007669"/>
    <property type="project" value="UniProtKB-KW"/>
</dbReference>
<dbReference type="CDD" id="cd12632">
    <property type="entry name" value="RRM1_CELF3_4_5_6"/>
    <property type="match status" value="1"/>
</dbReference>
<dbReference type="CDD" id="cd12635">
    <property type="entry name" value="RRM2_CELF3_4_5_6"/>
    <property type="match status" value="1"/>
</dbReference>
<dbReference type="CDD" id="cd12639">
    <property type="entry name" value="RRM3_CELF3_4_5_6"/>
    <property type="match status" value="1"/>
</dbReference>
<dbReference type="FunFam" id="3.30.70.330:FF:000007">
    <property type="entry name" value="CUGBP Elav-like family member 4 isoform 3"/>
    <property type="match status" value="1"/>
</dbReference>
<dbReference type="FunFam" id="3.30.70.330:FF:000010">
    <property type="entry name" value="CUGBP Elav-like family member 4 isoform 3"/>
    <property type="match status" value="1"/>
</dbReference>
<dbReference type="FunFam" id="3.30.70.330:FF:000069">
    <property type="entry name" value="CUGBP Elav-like family member 5 isoform X1"/>
    <property type="match status" value="1"/>
</dbReference>
<dbReference type="Gene3D" id="3.30.70.330">
    <property type="match status" value="3"/>
</dbReference>
<dbReference type="InterPro" id="IPR034648">
    <property type="entry name" value="CELF3/4/5/6_RRM1"/>
</dbReference>
<dbReference type="InterPro" id="IPR012677">
    <property type="entry name" value="Nucleotide-bd_a/b_plait_sf"/>
</dbReference>
<dbReference type="InterPro" id="IPR035979">
    <property type="entry name" value="RBD_domain_sf"/>
</dbReference>
<dbReference type="InterPro" id="IPR000504">
    <property type="entry name" value="RRM_dom"/>
</dbReference>
<dbReference type="PANTHER" id="PTHR24012">
    <property type="entry name" value="RNA BINDING PROTEIN"/>
    <property type="match status" value="1"/>
</dbReference>
<dbReference type="Pfam" id="PF00076">
    <property type="entry name" value="RRM_1"/>
    <property type="match status" value="3"/>
</dbReference>
<dbReference type="SMART" id="SM00360">
    <property type="entry name" value="RRM"/>
    <property type="match status" value="3"/>
</dbReference>
<dbReference type="SUPFAM" id="SSF54928">
    <property type="entry name" value="RNA-binding domain, RBD"/>
    <property type="match status" value="2"/>
</dbReference>
<dbReference type="PROSITE" id="PS50102">
    <property type="entry name" value="RRM"/>
    <property type="match status" value="3"/>
</dbReference>
<reference key="1">
    <citation type="submission" date="2006-10" db="EMBL/GenBank/DDBJ databases">
        <authorList>
            <consortium name="NIH - Xenopus Gene Collection (XGC) project"/>
        </authorList>
    </citation>
    <scope>NUCLEOTIDE SEQUENCE [LARGE SCALE MRNA]</scope>
    <source>
        <tissue>Brain</tissue>
    </source>
</reference>
<feature type="chain" id="PRO_0000295228" description="CUGBP Elav-like family member 5">
    <location>
        <begin position="1"/>
        <end position="486"/>
    </location>
</feature>
<feature type="domain" description="RRM 1" evidence="2">
    <location>
        <begin position="47"/>
        <end position="128"/>
    </location>
</feature>
<feature type="domain" description="RRM 2" evidence="2">
    <location>
        <begin position="135"/>
        <end position="215"/>
    </location>
</feature>
<feature type="domain" description="RRM 3" evidence="2">
    <location>
        <begin position="401"/>
        <end position="479"/>
    </location>
</feature>
<feature type="region of interest" description="Disordered" evidence="3">
    <location>
        <begin position="1"/>
        <end position="39"/>
    </location>
</feature>
<feature type="compositionally biased region" description="Basic and acidic residues" evidence="3">
    <location>
        <begin position="1"/>
        <end position="11"/>
    </location>
</feature>
<feature type="compositionally biased region" description="Low complexity" evidence="3">
    <location>
        <begin position="12"/>
        <end position="24"/>
    </location>
</feature>
<gene>
    <name type="primary">celf5</name>
    <name type="synonym">brunol5</name>
</gene>
<protein>
    <recommendedName>
        <fullName>CUGBP Elav-like family member 5</fullName>
        <shortName>CELF-5</shortName>
    </recommendedName>
    <alternativeName>
        <fullName>Bruno-like protein 5</fullName>
    </alternativeName>
    <alternativeName>
        <fullName>CUG-BP- and ETR-3-like factor 5</fullName>
    </alternativeName>
    <alternativeName>
        <fullName>RNA-binding protein BRUNOL-5</fullName>
    </alternativeName>
</protein>
<comment type="function">
    <text evidence="1">RNA-binding protein that may be implicated in the regulation of pre-mRNA alternative splicing.</text>
</comment>
<comment type="subcellular location">
    <subcellularLocation>
        <location evidence="1">Nucleus</location>
    </subcellularLocation>
    <subcellularLocation>
        <location evidence="1">Cytoplasm</location>
    </subcellularLocation>
</comment>
<comment type="similarity">
    <text evidence="4">Belongs to the CELF/BRUNOL family.</text>
</comment>
<evidence type="ECO:0000250" key="1"/>
<evidence type="ECO:0000255" key="2">
    <source>
        <dbReference type="PROSITE-ProRule" id="PRU00176"/>
    </source>
</evidence>
<evidence type="ECO:0000256" key="3">
    <source>
        <dbReference type="SAM" id="MobiDB-lite"/>
    </source>
</evidence>
<evidence type="ECO:0000305" key="4"/>
<keyword id="KW-0963">Cytoplasm</keyword>
<keyword id="KW-0507">mRNA processing</keyword>
<keyword id="KW-0539">Nucleus</keyword>
<keyword id="KW-1185">Reference proteome</keyword>
<keyword id="KW-0677">Repeat</keyword>
<keyword id="KW-0694">RNA-binding</keyword>
<organism>
    <name type="scientific">Xenopus tropicalis</name>
    <name type="common">Western clawed frog</name>
    <name type="synonym">Silurana tropicalis</name>
    <dbReference type="NCBI Taxonomy" id="8364"/>
    <lineage>
        <taxon>Eukaryota</taxon>
        <taxon>Metazoa</taxon>
        <taxon>Chordata</taxon>
        <taxon>Craniata</taxon>
        <taxon>Vertebrata</taxon>
        <taxon>Euteleostomi</taxon>
        <taxon>Amphibia</taxon>
        <taxon>Batrachia</taxon>
        <taxon>Anura</taxon>
        <taxon>Pipoidea</taxon>
        <taxon>Pipidae</taxon>
        <taxon>Xenopodinae</taxon>
        <taxon>Xenopus</taxon>
        <taxon>Silurana</taxon>
    </lineage>
</organism>
<proteinExistence type="evidence at transcript level"/>
<accession>A0JM51</accession>